<name>SYW_VIBVY</name>
<sequence>MSKPIVLSGVQPSGELSIGNYLGALRQWQQMQDDYDCQYCVVDLHAITVRQDPKALHEATLDALAICLAVGVDPKKSTLFVQSHVPEHAQLGWLLNCYTQMGELSRMTQFKDKSARYANDVNVGLFGYPVLMAADILLYGAHQVPVGSDQKQHLELARDIATRFNNIYSPENPIFTIPEPYIPTVNARVMSLQDATKKMSKSDDNRKNVITLLEDPKSIIKKINKAQTDTETPPRIAHDWDNKAGISNLMGLYSAATGMSFEEIEAKYQGVEMYGPFKKDVGEALVAMLEPIQAEYHRIREDRGYMNEVMRQGADKASARAAETLKKVYEVVGFVGRP</sequence>
<evidence type="ECO:0000255" key="1">
    <source>
        <dbReference type="HAMAP-Rule" id="MF_00140"/>
    </source>
</evidence>
<gene>
    <name evidence="1" type="primary">trpS</name>
    <name type="ordered locus">VV3058</name>
</gene>
<protein>
    <recommendedName>
        <fullName evidence="1">Tryptophan--tRNA ligase</fullName>
        <ecNumber evidence="1">6.1.1.2</ecNumber>
    </recommendedName>
    <alternativeName>
        <fullName evidence="1">Tryptophanyl-tRNA synthetase</fullName>
        <shortName evidence="1">TrpRS</shortName>
    </alternativeName>
</protein>
<accession>Q7MH15</accession>
<organism>
    <name type="scientific">Vibrio vulnificus (strain YJ016)</name>
    <dbReference type="NCBI Taxonomy" id="196600"/>
    <lineage>
        <taxon>Bacteria</taxon>
        <taxon>Pseudomonadati</taxon>
        <taxon>Pseudomonadota</taxon>
        <taxon>Gammaproteobacteria</taxon>
        <taxon>Vibrionales</taxon>
        <taxon>Vibrionaceae</taxon>
        <taxon>Vibrio</taxon>
    </lineage>
</organism>
<proteinExistence type="inferred from homology"/>
<reference key="1">
    <citation type="journal article" date="2003" name="Genome Res.">
        <title>Comparative genome analysis of Vibrio vulnificus, a marine pathogen.</title>
        <authorList>
            <person name="Chen C.-Y."/>
            <person name="Wu K.-M."/>
            <person name="Chang Y.-C."/>
            <person name="Chang C.-H."/>
            <person name="Tsai H.-C."/>
            <person name="Liao T.-L."/>
            <person name="Liu Y.-M."/>
            <person name="Chen H.-J."/>
            <person name="Shen A.B.-T."/>
            <person name="Li J.-C."/>
            <person name="Su T.-L."/>
            <person name="Shao C.-P."/>
            <person name="Lee C.-T."/>
            <person name="Hor L.-I."/>
            <person name="Tsai S.-F."/>
        </authorList>
    </citation>
    <scope>NUCLEOTIDE SEQUENCE [LARGE SCALE GENOMIC DNA]</scope>
    <source>
        <strain>YJ016</strain>
    </source>
</reference>
<feature type="chain" id="PRO_0000136709" description="Tryptophan--tRNA ligase">
    <location>
        <begin position="1"/>
        <end position="338"/>
    </location>
</feature>
<feature type="short sequence motif" description="'HIGH' region" evidence="1">
    <location>
        <begin position="12"/>
        <end position="20"/>
    </location>
</feature>
<feature type="short sequence motif" description="'KMSKS' region" evidence="1">
    <location>
        <begin position="198"/>
        <end position="202"/>
    </location>
</feature>
<feature type="binding site" evidence="1">
    <location>
        <begin position="11"/>
        <end position="13"/>
    </location>
    <ligand>
        <name>ATP</name>
        <dbReference type="ChEBI" id="CHEBI:30616"/>
    </ligand>
</feature>
<feature type="binding site" evidence="1">
    <location>
        <begin position="19"/>
        <end position="20"/>
    </location>
    <ligand>
        <name>ATP</name>
        <dbReference type="ChEBI" id="CHEBI:30616"/>
    </ligand>
</feature>
<feature type="binding site" evidence="1">
    <location>
        <position position="135"/>
    </location>
    <ligand>
        <name>L-tryptophan</name>
        <dbReference type="ChEBI" id="CHEBI:57912"/>
    </ligand>
</feature>
<feature type="binding site" evidence="1">
    <location>
        <begin position="147"/>
        <end position="149"/>
    </location>
    <ligand>
        <name>ATP</name>
        <dbReference type="ChEBI" id="CHEBI:30616"/>
    </ligand>
</feature>
<feature type="binding site" evidence="1">
    <location>
        <position position="189"/>
    </location>
    <ligand>
        <name>ATP</name>
        <dbReference type="ChEBI" id="CHEBI:30616"/>
    </ligand>
</feature>
<feature type="binding site" evidence="1">
    <location>
        <begin position="198"/>
        <end position="202"/>
    </location>
    <ligand>
        <name>ATP</name>
        <dbReference type="ChEBI" id="CHEBI:30616"/>
    </ligand>
</feature>
<dbReference type="EC" id="6.1.1.2" evidence="1"/>
<dbReference type="EMBL" id="BA000037">
    <property type="protein sequence ID" value="BAC95822.1"/>
    <property type="molecule type" value="Genomic_DNA"/>
</dbReference>
<dbReference type="RefSeq" id="WP_011151320.1">
    <property type="nucleotide sequence ID" value="NC_005139.1"/>
</dbReference>
<dbReference type="SMR" id="Q7MH15"/>
<dbReference type="STRING" id="672.VV93_v1c27860"/>
<dbReference type="GeneID" id="93895578"/>
<dbReference type="KEGG" id="vvy:VV3058"/>
<dbReference type="eggNOG" id="COG0180">
    <property type="taxonomic scope" value="Bacteria"/>
</dbReference>
<dbReference type="HOGENOM" id="CLU_029244_1_4_6"/>
<dbReference type="Proteomes" id="UP000002675">
    <property type="component" value="Chromosome I"/>
</dbReference>
<dbReference type="GO" id="GO:0005829">
    <property type="term" value="C:cytosol"/>
    <property type="evidence" value="ECO:0007669"/>
    <property type="project" value="TreeGrafter"/>
</dbReference>
<dbReference type="GO" id="GO:0005524">
    <property type="term" value="F:ATP binding"/>
    <property type="evidence" value="ECO:0007669"/>
    <property type="project" value="UniProtKB-UniRule"/>
</dbReference>
<dbReference type="GO" id="GO:0004830">
    <property type="term" value="F:tryptophan-tRNA ligase activity"/>
    <property type="evidence" value="ECO:0007669"/>
    <property type="project" value="UniProtKB-UniRule"/>
</dbReference>
<dbReference type="GO" id="GO:0006436">
    <property type="term" value="P:tryptophanyl-tRNA aminoacylation"/>
    <property type="evidence" value="ECO:0007669"/>
    <property type="project" value="UniProtKB-UniRule"/>
</dbReference>
<dbReference type="CDD" id="cd00806">
    <property type="entry name" value="TrpRS_core"/>
    <property type="match status" value="1"/>
</dbReference>
<dbReference type="FunFam" id="1.10.240.10:FF:000002">
    <property type="entry name" value="Tryptophan--tRNA ligase"/>
    <property type="match status" value="1"/>
</dbReference>
<dbReference type="FunFam" id="3.40.50.620:FF:000024">
    <property type="entry name" value="Tryptophan--tRNA ligase"/>
    <property type="match status" value="1"/>
</dbReference>
<dbReference type="Gene3D" id="3.40.50.620">
    <property type="entry name" value="HUPs"/>
    <property type="match status" value="1"/>
</dbReference>
<dbReference type="Gene3D" id="1.10.240.10">
    <property type="entry name" value="Tyrosyl-Transfer RNA Synthetase"/>
    <property type="match status" value="1"/>
</dbReference>
<dbReference type="HAMAP" id="MF_00140_B">
    <property type="entry name" value="Trp_tRNA_synth_B"/>
    <property type="match status" value="1"/>
</dbReference>
<dbReference type="InterPro" id="IPR002305">
    <property type="entry name" value="aa-tRNA-synth_Ic"/>
</dbReference>
<dbReference type="InterPro" id="IPR014729">
    <property type="entry name" value="Rossmann-like_a/b/a_fold"/>
</dbReference>
<dbReference type="InterPro" id="IPR002306">
    <property type="entry name" value="Trp-tRNA-ligase"/>
</dbReference>
<dbReference type="InterPro" id="IPR024109">
    <property type="entry name" value="Trp-tRNA-ligase_bac-type"/>
</dbReference>
<dbReference type="InterPro" id="IPR050203">
    <property type="entry name" value="Trp-tRNA_synthetase"/>
</dbReference>
<dbReference type="NCBIfam" id="TIGR00233">
    <property type="entry name" value="trpS"/>
    <property type="match status" value="1"/>
</dbReference>
<dbReference type="PANTHER" id="PTHR43766">
    <property type="entry name" value="TRYPTOPHAN--TRNA LIGASE, MITOCHONDRIAL"/>
    <property type="match status" value="1"/>
</dbReference>
<dbReference type="PANTHER" id="PTHR43766:SF1">
    <property type="entry name" value="TRYPTOPHAN--TRNA LIGASE, MITOCHONDRIAL"/>
    <property type="match status" value="1"/>
</dbReference>
<dbReference type="Pfam" id="PF00579">
    <property type="entry name" value="tRNA-synt_1b"/>
    <property type="match status" value="1"/>
</dbReference>
<dbReference type="PRINTS" id="PR01039">
    <property type="entry name" value="TRNASYNTHTRP"/>
</dbReference>
<dbReference type="SUPFAM" id="SSF52374">
    <property type="entry name" value="Nucleotidylyl transferase"/>
    <property type="match status" value="1"/>
</dbReference>
<comment type="function">
    <text evidence="1">Catalyzes the attachment of tryptophan to tRNA(Trp).</text>
</comment>
<comment type="catalytic activity">
    <reaction evidence="1">
        <text>tRNA(Trp) + L-tryptophan + ATP = L-tryptophyl-tRNA(Trp) + AMP + diphosphate + H(+)</text>
        <dbReference type="Rhea" id="RHEA:24080"/>
        <dbReference type="Rhea" id="RHEA-COMP:9671"/>
        <dbReference type="Rhea" id="RHEA-COMP:9705"/>
        <dbReference type="ChEBI" id="CHEBI:15378"/>
        <dbReference type="ChEBI" id="CHEBI:30616"/>
        <dbReference type="ChEBI" id="CHEBI:33019"/>
        <dbReference type="ChEBI" id="CHEBI:57912"/>
        <dbReference type="ChEBI" id="CHEBI:78442"/>
        <dbReference type="ChEBI" id="CHEBI:78535"/>
        <dbReference type="ChEBI" id="CHEBI:456215"/>
        <dbReference type="EC" id="6.1.1.2"/>
    </reaction>
</comment>
<comment type="subunit">
    <text evidence="1">Homodimer.</text>
</comment>
<comment type="subcellular location">
    <subcellularLocation>
        <location evidence="1">Cytoplasm</location>
    </subcellularLocation>
</comment>
<comment type="similarity">
    <text evidence="1">Belongs to the class-I aminoacyl-tRNA synthetase family.</text>
</comment>
<keyword id="KW-0030">Aminoacyl-tRNA synthetase</keyword>
<keyword id="KW-0067">ATP-binding</keyword>
<keyword id="KW-0963">Cytoplasm</keyword>
<keyword id="KW-0436">Ligase</keyword>
<keyword id="KW-0547">Nucleotide-binding</keyword>
<keyword id="KW-0648">Protein biosynthesis</keyword>